<reference key="1">
    <citation type="journal article" date="2011" name="Proc. Natl. Acad. Sci. U.S.A.">
        <title>Genomic anatomy of Escherichia coli O157:H7 outbreaks.</title>
        <authorList>
            <person name="Eppinger M."/>
            <person name="Mammel M.K."/>
            <person name="Leclerc J.E."/>
            <person name="Ravel J."/>
            <person name="Cebula T.A."/>
        </authorList>
    </citation>
    <scope>NUCLEOTIDE SEQUENCE [LARGE SCALE GENOMIC DNA]</scope>
    <source>
        <strain>EC4115 / EHEC</strain>
    </source>
</reference>
<comment type="catalytic activity">
    <reaction evidence="1">
        <text>D-glucose + ATP = D-glucose 6-phosphate + ADP + H(+)</text>
        <dbReference type="Rhea" id="RHEA:17825"/>
        <dbReference type="ChEBI" id="CHEBI:4167"/>
        <dbReference type="ChEBI" id="CHEBI:15378"/>
        <dbReference type="ChEBI" id="CHEBI:30616"/>
        <dbReference type="ChEBI" id="CHEBI:61548"/>
        <dbReference type="ChEBI" id="CHEBI:456216"/>
        <dbReference type="EC" id="2.7.1.2"/>
    </reaction>
</comment>
<comment type="subcellular location">
    <subcellularLocation>
        <location evidence="1">Cytoplasm</location>
    </subcellularLocation>
</comment>
<comment type="similarity">
    <text evidence="1">Belongs to the bacterial glucokinase family.</text>
</comment>
<dbReference type="EC" id="2.7.1.2" evidence="1"/>
<dbReference type="EMBL" id="CP001164">
    <property type="protein sequence ID" value="ACI36578.1"/>
    <property type="molecule type" value="Genomic_DNA"/>
</dbReference>
<dbReference type="RefSeq" id="WP_000170346.1">
    <property type="nucleotide sequence ID" value="NC_011353.1"/>
</dbReference>
<dbReference type="SMR" id="B5YZU2"/>
<dbReference type="GeneID" id="75202543"/>
<dbReference type="KEGG" id="ecf:ECH74115_3620"/>
<dbReference type="HOGENOM" id="CLU_042582_1_0_6"/>
<dbReference type="GO" id="GO:0005829">
    <property type="term" value="C:cytosol"/>
    <property type="evidence" value="ECO:0007669"/>
    <property type="project" value="TreeGrafter"/>
</dbReference>
<dbReference type="GO" id="GO:0005524">
    <property type="term" value="F:ATP binding"/>
    <property type="evidence" value="ECO:0007669"/>
    <property type="project" value="UniProtKB-UniRule"/>
</dbReference>
<dbReference type="GO" id="GO:0005536">
    <property type="term" value="F:D-glucose binding"/>
    <property type="evidence" value="ECO:0007669"/>
    <property type="project" value="InterPro"/>
</dbReference>
<dbReference type="GO" id="GO:0004340">
    <property type="term" value="F:glucokinase activity"/>
    <property type="evidence" value="ECO:0007669"/>
    <property type="project" value="UniProtKB-UniRule"/>
</dbReference>
<dbReference type="GO" id="GO:0006096">
    <property type="term" value="P:glycolytic process"/>
    <property type="evidence" value="ECO:0007669"/>
    <property type="project" value="UniProtKB-UniRule"/>
</dbReference>
<dbReference type="CDD" id="cd24008">
    <property type="entry name" value="ASKHA_NBD_GLK"/>
    <property type="match status" value="1"/>
</dbReference>
<dbReference type="FunFam" id="3.30.420.40:FF:000045">
    <property type="entry name" value="Glucokinase"/>
    <property type="match status" value="1"/>
</dbReference>
<dbReference type="FunFam" id="3.40.367.20:FF:000002">
    <property type="entry name" value="Glucokinase"/>
    <property type="match status" value="1"/>
</dbReference>
<dbReference type="Gene3D" id="3.30.420.40">
    <property type="match status" value="1"/>
</dbReference>
<dbReference type="Gene3D" id="3.40.367.20">
    <property type="match status" value="1"/>
</dbReference>
<dbReference type="HAMAP" id="MF_00524">
    <property type="entry name" value="Glucokinase"/>
    <property type="match status" value="1"/>
</dbReference>
<dbReference type="InterPro" id="IPR043129">
    <property type="entry name" value="ATPase_NBD"/>
</dbReference>
<dbReference type="InterPro" id="IPR050201">
    <property type="entry name" value="Bacterial_glucokinase"/>
</dbReference>
<dbReference type="InterPro" id="IPR003836">
    <property type="entry name" value="Glucokinase"/>
</dbReference>
<dbReference type="NCBIfam" id="TIGR00749">
    <property type="entry name" value="glk"/>
    <property type="match status" value="1"/>
</dbReference>
<dbReference type="NCBIfam" id="NF001414">
    <property type="entry name" value="PRK00292.1-1"/>
    <property type="match status" value="1"/>
</dbReference>
<dbReference type="NCBIfam" id="NF001416">
    <property type="entry name" value="PRK00292.1-3"/>
    <property type="match status" value="1"/>
</dbReference>
<dbReference type="PANTHER" id="PTHR47690">
    <property type="entry name" value="GLUCOKINASE"/>
    <property type="match status" value="1"/>
</dbReference>
<dbReference type="PANTHER" id="PTHR47690:SF1">
    <property type="entry name" value="GLUCOKINASE"/>
    <property type="match status" value="1"/>
</dbReference>
<dbReference type="Pfam" id="PF02685">
    <property type="entry name" value="Glucokinase"/>
    <property type="match status" value="1"/>
</dbReference>
<dbReference type="SUPFAM" id="SSF53067">
    <property type="entry name" value="Actin-like ATPase domain"/>
    <property type="match status" value="1"/>
</dbReference>
<gene>
    <name evidence="1" type="primary">glk</name>
    <name type="ordered locus">ECH74115_3620</name>
</gene>
<proteinExistence type="inferred from homology"/>
<organism>
    <name type="scientific">Escherichia coli O157:H7 (strain EC4115 / EHEC)</name>
    <dbReference type="NCBI Taxonomy" id="444450"/>
    <lineage>
        <taxon>Bacteria</taxon>
        <taxon>Pseudomonadati</taxon>
        <taxon>Pseudomonadota</taxon>
        <taxon>Gammaproteobacteria</taxon>
        <taxon>Enterobacterales</taxon>
        <taxon>Enterobacteriaceae</taxon>
        <taxon>Escherichia</taxon>
    </lineage>
</organism>
<sequence>MTKYALVGDVGGTNARLALCDIASGEISQAKTYSGLDYPSLEAVIRVYLEEHKVEVKDGCIAIACPITGDWVAMTNHTWAFSIAEMKKNLGFSHLEIINDFTAVSMAIPMLKKEHLIQFGGAEPVEGKPIAVYGAGTGLGVAHLVHVDKRWVSLPGEGGHVDFAPNSEEEAIILEILRAEIGHVSAERVLSGPGLVNLYRAIVKADNRLPENLKPKDITERALADSCTDCRRALSLFCVIMGRFGGNLALNLGTFGGVFIAGGIVPRFLEFFKASGFRAAFEDKGRFKEYVHDIPVYLIVHDNPGLLGSGAHLRQTLGHIL</sequence>
<accession>B5YZU2</accession>
<name>GLK_ECO5E</name>
<evidence type="ECO:0000255" key="1">
    <source>
        <dbReference type="HAMAP-Rule" id="MF_00524"/>
    </source>
</evidence>
<keyword id="KW-0067">ATP-binding</keyword>
<keyword id="KW-0963">Cytoplasm</keyword>
<keyword id="KW-0324">Glycolysis</keyword>
<keyword id="KW-0418">Kinase</keyword>
<keyword id="KW-0547">Nucleotide-binding</keyword>
<keyword id="KW-0808">Transferase</keyword>
<protein>
    <recommendedName>
        <fullName evidence="1">Glucokinase</fullName>
        <ecNumber evidence="1">2.7.1.2</ecNumber>
    </recommendedName>
    <alternativeName>
        <fullName evidence="1">Glucose kinase</fullName>
    </alternativeName>
</protein>
<feature type="chain" id="PRO_1000127700" description="Glucokinase">
    <location>
        <begin position="1"/>
        <end position="321"/>
    </location>
</feature>
<feature type="binding site" evidence="1">
    <location>
        <begin position="8"/>
        <end position="13"/>
    </location>
    <ligand>
        <name>ATP</name>
        <dbReference type="ChEBI" id="CHEBI:30616"/>
    </ligand>
</feature>